<gene>
    <name type="ordered locus">MIMI_L389</name>
</gene>
<feature type="chain" id="PRO_0000247293" description="Uncharacterized protein L389">
    <location>
        <begin position="1"/>
        <end position="1083"/>
    </location>
</feature>
<feature type="region of interest" description="Disordered" evidence="1">
    <location>
        <begin position="93"/>
        <end position="145"/>
    </location>
</feature>
<feature type="compositionally biased region" description="Low complexity" evidence="1">
    <location>
        <begin position="108"/>
        <end position="145"/>
    </location>
</feature>
<organismHost>
    <name type="scientific">Acanthamoeba polyphaga</name>
    <name type="common">Amoeba</name>
    <dbReference type="NCBI Taxonomy" id="5757"/>
</organismHost>
<proteinExistence type="evidence at protein level"/>
<dbReference type="EMBL" id="AY653733">
    <property type="protein sequence ID" value="AAV50658.1"/>
    <property type="molecule type" value="Genomic_DNA"/>
</dbReference>
<dbReference type="KEGG" id="vg:9925011"/>
<dbReference type="OrthoDB" id="29482at10239"/>
<dbReference type="Proteomes" id="UP000001134">
    <property type="component" value="Genome"/>
</dbReference>
<dbReference type="GO" id="GO:0044423">
    <property type="term" value="C:virion component"/>
    <property type="evidence" value="ECO:0007669"/>
    <property type="project" value="UniProtKB-KW"/>
</dbReference>
<comment type="subcellular location">
    <subcellularLocation>
        <location evidence="2">Virion</location>
    </subcellularLocation>
</comment>
<evidence type="ECO:0000256" key="1">
    <source>
        <dbReference type="SAM" id="MobiDB-lite"/>
    </source>
</evidence>
<evidence type="ECO:0000269" key="2">
    <source>
    </source>
</evidence>
<name>YL389_MIMIV</name>
<keyword id="KW-1185">Reference proteome</keyword>
<keyword id="KW-0946">Virion</keyword>
<protein>
    <recommendedName>
        <fullName>Uncharacterized protein L389</fullName>
    </recommendedName>
</protein>
<accession>Q5UQ45</accession>
<organism>
    <name type="scientific">Acanthamoeba polyphaga mimivirus</name>
    <name type="common">APMV</name>
    <dbReference type="NCBI Taxonomy" id="212035"/>
    <lineage>
        <taxon>Viruses</taxon>
        <taxon>Varidnaviria</taxon>
        <taxon>Bamfordvirae</taxon>
        <taxon>Nucleocytoviricota</taxon>
        <taxon>Megaviricetes</taxon>
        <taxon>Imitervirales</taxon>
        <taxon>Mimiviridae</taxon>
        <taxon>Megamimivirinae</taxon>
        <taxon>Mimivirus</taxon>
        <taxon>Mimivirus bradfordmassiliense</taxon>
    </lineage>
</organism>
<sequence length="1083" mass="127331">MKRTIKNFLTGSITYFDTEKYFSNPNLYYYRIYPVEDNKTIKIRVSTTDNTIIHPEINKTKIILKIKILEDSIVRSLRKEIITNRNARKQLHSKGNLRYVPTTSRNPSNTDTYSSSIDISSSSSSINTSDDSSGKTSSNDLSDMSSKSLNESLTDYIESNPFELDKPSTTTNRISKTKYISKIIGVYKLNTKSFKTILNNLPNKHILDLSEFIQGDFLLSIYNNYENIFYLRNDFMLMNKLHTTIPLEINRNRLFFSFLFLLFYLHQNNYNTVNVELFNIGLSHNNSDKLISLKTIKGRRTVPLTINYEHGGYIEPILIDYVAMSNGQQNVFKLSNFMPFDNSVLYKNITDDIKYPYLPIDLIKKTFGTISSYVMENLCWIAKSTTNTEISIIDRQILYLLDMYDLFNGVPLSNNNITNVANYNMVQTNIIMNCHGDVSKCFQYNTNNLINDLDNLEVTILPPDNTSPTKLRMIPDDLKKLYQIYNNQYGIKIFGSIKSTNDIDIKMETFTRRVCLSRYWYSQLKNSYLVSRTILEDNYNFFEAFLDEQIDKLMKLIQQELYTIDGKFQVEIFVYHFLSLSTDYILPSINNFDYSNYLGESYVTMIYDFVTSIISNGNIRNKLFVFLALSKIIHLSMIRKLFMVFYIKENSNNNSELLQHGINNNKITMDKFDENIPFEFDANIYCQQRGLNINLIEYRYTILKELVPLKQNDIGTNNLGYYLFRLLDNNIKHTYVLYMYEDFKYCILGRIRFDKNKVPFKDYTYIPKTQDILYPKMDEYEFYKKNNEYVAFLDRGMDTQRMSVLDHDNIFIESFRQGEPVLSGASGHTADILLCAGYLEPSDSDRFVNKMKLMTILCVSVMFPRKDHSIFEMYRALQLFNKPMKTNEFTCPVENINTGSCFKWLLRDIVYNVGDNQLIGNQIYNTLTNRLNRSFEYYLSPKYYRIIEKIIEQFYKSTFQNININKFANDIRNIISDQQFNNINDELFIIMTIIRREGNKIWMNDAEYAYNIENKHISMRNFIDGNYSLPDFFTDDDIFLYEDNVITCTRSIYDFVKPVNSFDNTCLILQKIFWAASKPQCIW</sequence>
<reference key="1">
    <citation type="journal article" date="2004" name="Science">
        <title>The 1.2-megabase genome sequence of Mimivirus.</title>
        <authorList>
            <person name="Raoult D."/>
            <person name="Audic S."/>
            <person name="Robert C."/>
            <person name="Abergel C."/>
            <person name="Renesto P."/>
            <person name="Ogata H."/>
            <person name="La Scola B."/>
            <person name="Susan M."/>
            <person name="Claverie J.-M."/>
        </authorList>
    </citation>
    <scope>NUCLEOTIDE SEQUENCE [LARGE SCALE GENOMIC DNA]</scope>
    <source>
        <strain>Rowbotham-Bradford</strain>
    </source>
</reference>
<reference key="2">
    <citation type="journal article" date="2006" name="J. Virol.">
        <title>Mimivirus giant particles incorporate a large fraction of anonymous and unique gene products.</title>
        <authorList>
            <person name="Renesto P."/>
            <person name="Abergel C."/>
            <person name="Decloquement P."/>
            <person name="Moinier D."/>
            <person name="Azza S."/>
            <person name="Ogata H."/>
            <person name="Fourquet P."/>
            <person name="Gorvel J.-P."/>
            <person name="Claverie J.-M."/>
            <person name="Raoult D."/>
        </authorList>
    </citation>
    <scope>IDENTIFICATION BY MASS SPECTROMETRY [LARGE SCALE ANALYSIS]</scope>
    <scope>SUBCELLULAR LOCATION</scope>
</reference>